<gene>
    <name type="primary">D1</name>
</gene>
<sequence>VVSTSPTKLVNVSYNNLTVNLGNELTPTQVKNQPTKVSWDAEPGALYTLVMTDPDAPSRKNPVFREWHHWLIINISGQNVSSGTVLSDYIGSGPPKGTGLHRYVFLVYKQPGSITDTQHGGNRPNFKVMDFANKHHLGNPVAGNFFQAKHED</sequence>
<name>D1_ONCVO</name>
<organism>
    <name type="scientific">Onchocerca volvulus</name>
    <dbReference type="NCBI Taxonomy" id="6282"/>
    <lineage>
        <taxon>Eukaryota</taxon>
        <taxon>Metazoa</taxon>
        <taxon>Ecdysozoa</taxon>
        <taxon>Nematoda</taxon>
        <taxon>Chromadorea</taxon>
        <taxon>Rhabditida</taxon>
        <taxon>Spirurina</taxon>
        <taxon>Spiruromorpha</taxon>
        <taxon>Filarioidea</taxon>
        <taxon>Onchocercidae</taxon>
        <taxon>Onchocerca</taxon>
    </lineage>
</organism>
<protein>
    <recommendedName>
        <fullName>Protein D1</fullName>
    </recommendedName>
</protein>
<dbReference type="EMBL" id="X87991">
    <property type="protein sequence ID" value="CAA61244.1"/>
    <property type="molecule type" value="mRNA"/>
</dbReference>
<dbReference type="PIR" id="PC4215">
    <property type="entry name" value="PC4215"/>
</dbReference>
<dbReference type="PIR" id="PC4216">
    <property type="entry name" value="PC4216"/>
</dbReference>
<dbReference type="SMR" id="P54186"/>
<dbReference type="STRING" id="6282.P54186"/>
<dbReference type="MEROPS" id="I51.002"/>
<dbReference type="HOGENOM" id="CLU_043994_3_0_1"/>
<dbReference type="Proteomes" id="UP000024404">
    <property type="component" value="Unassembled WGS sequence"/>
</dbReference>
<dbReference type="CDD" id="cd00866">
    <property type="entry name" value="PEBP_euk"/>
    <property type="match status" value="1"/>
</dbReference>
<dbReference type="Gene3D" id="3.90.280.10">
    <property type="entry name" value="PEBP-like"/>
    <property type="match status" value="1"/>
</dbReference>
<dbReference type="InterPro" id="IPR008914">
    <property type="entry name" value="PEBP"/>
</dbReference>
<dbReference type="InterPro" id="IPR036610">
    <property type="entry name" value="PEBP-like_sf"/>
</dbReference>
<dbReference type="InterPro" id="IPR035810">
    <property type="entry name" value="PEBP_euk"/>
</dbReference>
<dbReference type="InterPro" id="IPR001858">
    <property type="entry name" value="Phosphatidylethanolamine-bd_CS"/>
</dbReference>
<dbReference type="PANTHER" id="PTHR11362">
    <property type="entry name" value="PHOSPHATIDYLETHANOLAMINE-BINDING PROTEIN"/>
    <property type="match status" value="1"/>
</dbReference>
<dbReference type="PANTHER" id="PTHR11362:SF82">
    <property type="entry name" value="PHOSPHATIDYLETHANOLAMINE-BINDING PROTEIN 4"/>
    <property type="match status" value="1"/>
</dbReference>
<dbReference type="Pfam" id="PF01161">
    <property type="entry name" value="PBP"/>
    <property type="match status" value="1"/>
</dbReference>
<dbReference type="SUPFAM" id="SSF49777">
    <property type="entry name" value="PEBP-like"/>
    <property type="match status" value="1"/>
</dbReference>
<dbReference type="PROSITE" id="PS01220">
    <property type="entry name" value="PBP"/>
    <property type="match status" value="1"/>
</dbReference>
<feature type="chain" id="PRO_0000204749" description="Protein D1">
    <location>
        <begin position="1" status="less than"/>
        <end position="152"/>
    </location>
</feature>
<feature type="non-terminal residue">
    <location>
        <position position="1"/>
    </location>
</feature>
<proteinExistence type="evidence at transcript level"/>
<evidence type="ECO:0000305" key="1"/>
<reference key="1">
    <citation type="journal article" date="1996" name="Gene">
        <title>Onchocerca volvulus: identification of cDNAs encoding a putative phosphatidyl-ethanolamine-binding protein and a putative partially processed mRNA precursor.</title>
        <authorList>
            <person name="Erttmann K.D."/>
            <person name="Gallin M.Y."/>
        </authorList>
    </citation>
    <scope>NUCLEOTIDE SEQUENCE [MRNA]</scope>
</reference>
<comment type="similarity">
    <text evidence="1">Belongs to the phosphatidylethanolamine-binding protein family.</text>
</comment>
<accession>P54186</accession>
<keyword id="KW-1185">Reference proteome</keyword>